<protein>
    <recommendedName>
        <fullName evidence="1">Ribosomal RNA large subunit methyltransferase H</fullName>
        <ecNumber evidence="1">2.1.1.177</ecNumber>
    </recommendedName>
    <alternativeName>
        <fullName evidence="1">23S rRNA (pseudouridine1915-N3)-methyltransferase</fullName>
    </alternativeName>
    <alternativeName>
        <fullName evidence="1">23S rRNA m3Psi1915 methyltransferase</fullName>
    </alternativeName>
    <alternativeName>
        <fullName evidence="1">rRNA (pseudouridine-N3-)-methyltransferase RlmH</fullName>
    </alternativeName>
</protein>
<dbReference type="EC" id="2.1.1.177" evidence="1"/>
<dbReference type="EMBL" id="BA000037">
    <property type="protein sequence ID" value="BAC93671.1"/>
    <property type="molecule type" value="Genomic_DNA"/>
</dbReference>
<dbReference type="RefSeq" id="WP_011078385.1">
    <property type="nucleotide sequence ID" value="NC_005139.1"/>
</dbReference>
<dbReference type="SMR" id="Q7MN10"/>
<dbReference type="STRING" id="672.VV93_v1c08440"/>
<dbReference type="GeneID" id="93894618"/>
<dbReference type="KEGG" id="vvy:VV0907"/>
<dbReference type="eggNOG" id="COG1576">
    <property type="taxonomic scope" value="Bacteria"/>
</dbReference>
<dbReference type="HOGENOM" id="CLU_100552_1_0_6"/>
<dbReference type="Proteomes" id="UP000002675">
    <property type="component" value="Chromosome I"/>
</dbReference>
<dbReference type="GO" id="GO:0005737">
    <property type="term" value="C:cytoplasm"/>
    <property type="evidence" value="ECO:0007669"/>
    <property type="project" value="UniProtKB-SubCell"/>
</dbReference>
<dbReference type="GO" id="GO:0070038">
    <property type="term" value="F:rRNA (pseudouridine-N3-)-methyltransferase activity"/>
    <property type="evidence" value="ECO:0007669"/>
    <property type="project" value="UniProtKB-UniRule"/>
</dbReference>
<dbReference type="CDD" id="cd18081">
    <property type="entry name" value="RlmH-like"/>
    <property type="match status" value="1"/>
</dbReference>
<dbReference type="Gene3D" id="3.40.1280.10">
    <property type="match status" value="1"/>
</dbReference>
<dbReference type="HAMAP" id="MF_00658">
    <property type="entry name" value="23SrRNA_methyltr_H"/>
    <property type="match status" value="1"/>
</dbReference>
<dbReference type="InterPro" id="IPR029028">
    <property type="entry name" value="Alpha/beta_knot_MTases"/>
</dbReference>
<dbReference type="InterPro" id="IPR003742">
    <property type="entry name" value="RlmH-like"/>
</dbReference>
<dbReference type="InterPro" id="IPR029026">
    <property type="entry name" value="tRNA_m1G_MTases_N"/>
</dbReference>
<dbReference type="NCBIfam" id="NF000984">
    <property type="entry name" value="PRK00103.1-1"/>
    <property type="match status" value="1"/>
</dbReference>
<dbReference type="NCBIfam" id="NF000986">
    <property type="entry name" value="PRK00103.1-4"/>
    <property type="match status" value="1"/>
</dbReference>
<dbReference type="NCBIfam" id="TIGR00246">
    <property type="entry name" value="tRNA_RlmH_YbeA"/>
    <property type="match status" value="1"/>
</dbReference>
<dbReference type="PANTHER" id="PTHR33603">
    <property type="entry name" value="METHYLTRANSFERASE"/>
    <property type="match status" value="1"/>
</dbReference>
<dbReference type="PANTHER" id="PTHR33603:SF1">
    <property type="entry name" value="RIBOSOMAL RNA LARGE SUBUNIT METHYLTRANSFERASE H"/>
    <property type="match status" value="1"/>
</dbReference>
<dbReference type="Pfam" id="PF02590">
    <property type="entry name" value="SPOUT_MTase"/>
    <property type="match status" value="1"/>
</dbReference>
<dbReference type="PIRSF" id="PIRSF004505">
    <property type="entry name" value="MT_bac"/>
    <property type="match status" value="1"/>
</dbReference>
<dbReference type="SUPFAM" id="SSF75217">
    <property type="entry name" value="alpha/beta knot"/>
    <property type="match status" value="1"/>
</dbReference>
<keyword id="KW-0963">Cytoplasm</keyword>
<keyword id="KW-0489">Methyltransferase</keyword>
<keyword id="KW-0698">rRNA processing</keyword>
<keyword id="KW-0949">S-adenosyl-L-methionine</keyword>
<keyword id="KW-0808">Transferase</keyword>
<name>RLMH_VIBVY</name>
<proteinExistence type="inferred from homology"/>
<organism>
    <name type="scientific">Vibrio vulnificus (strain YJ016)</name>
    <dbReference type="NCBI Taxonomy" id="196600"/>
    <lineage>
        <taxon>Bacteria</taxon>
        <taxon>Pseudomonadati</taxon>
        <taxon>Pseudomonadota</taxon>
        <taxon>Gammaproteobacteria</taxon>
        <taxon>Vibrionales</taxon>
        <taxon>Vibrionaceae</taxon>
        <taxon>Vibrio</taxon>
    </lineage>
</organism>
<reference key="1">
    <citation type="journal article" date="2003" name="Genome Res.">
        <title>Comparative genome analysis of Vibrio vulnificus, a marine pathogen.</title>
        <authorList>
            <person name="Chen C.-Y."/>
            <person name="Wu K.-M."/>
            <person name="Chang Y.-C."/>
            <person name="Chang C.-H."/>
            <person name="Tsai H.-C."/>
            <person name="Liao T.-L."/>
            <person name="Liu Y.-M."/>
            <person name="Chen H.-J."/>
            <person name="Shen A.B.-T."/>
            <person name="Li J.-C."/>
            <person name="Su T.-L."/>
            <person name="Shao C.-P."/>
            <person name="Lee C.-T."/>
            <person name="Hor L.-I."/>
            <person name="Tsai S.-F."/>
        </authorList>
    </citation>
    <scope>NUCLEOTIDE SEQUENCE [LARGE SCALE GENOMIC DNA]</scope>
    <source>
        <strain>YJ016</strain>
    </source>
</reference>
<accession>Q7MN10</accession>
<gene>
    <name evidence="1" type="primary">rlmH</name>
    <name type="ordered locus">VV0907</name>
</gene>
<sequence>MKIQLIAVGTKMPKWVEEGFQEYRRRFPHDMPLELIEITAGKRGKNADIARILQKEGEAMLAAIPKGNRIVTLDIPGKKWDTPELAQQLEAWKLDGRDVSILIGGPEGLAPACKAAAEQSWSLSALTLPHPLVRIVMAESLYRAWSITTNHPYHRE</sequence>
<evidence type="ECO:0000255" key="1">
    <source>
        <dbReference type="HAMAP-Rule" id="MF_00658"/>
    </source>
</evidence>
<comment type="function">
    <text evidence="1">Specifically methylates the pseudouridine at position 1915 (m3Psi1915) in 23S rRNA.</text>
</comment>
<comment type="catalytic activity">
    <reaction evidence="1">
        <text>pseudouridine(1915) in 23S rRNA + S-adenosyl-L-methionine = N(3)-methylpseudouridine(1915) in 23S rRNA + S-adenosyl-L-homocysteine + H(+)</text>
        <dbReference type="Rhea" id="RHEA:42752"/>
        <dbReference type="Rhea" id="RHEA-COMP:10221"/>
        <dbReference type="Rhea" id="RHEA-COMP:10222"/>
        <dbReference type="ChEBI" id="CHEBI:15378"/>
        <dbReference type="ChEBI" id="CHEBI:57856"/>
        <dbReference type="ChEBI" id="CHEBI:59789"/>
        <dbReference type="ChEBI" id="CHEBI:65314"/>
        <dbReference type="ChEBI" id="CHEBI:74486"/>
        <dbReference type="EC" id="2.1.1.177"/>
    </reaction>
</comment>
<comment type="subunit">
    <text evidence="1">Homodimer.</text>
</comment>
<comment type="subcellular location">
    <subcellularLocation>
        <location evidence="1">Cytoplasm</location>
    </subcellularLocation>
</comment>
<comment type="similarity">
    <text evidence="1">Belongs to the RNA methyltransferase RlmH family.</text>
</comment>
<feature type="chain" id="PRO_0000198210" description="Ribosomal RNA large subunit methyltransferase H">
    <location>
        <begin position="1"/>
        <end position="156"/>
    </location>
</feature>
<feature type="binding site" evidence="1">
    <location>
        <position position="73"/>
    </location>
    <ligand>
        <name>S-adenosyl-L-methionine</name>
        <dbReference type="ChEBI" id="CHEBI:59789"/>
    </ligand>
</feature>
<feature type="binding site" evidence="1">
    <location>
        <position position="104"/>
    </location>
    <ligand>
        <name>S-adenosyl-L-methionine</name>
        <dbReference type="ChEBI" id="CHEBI:59789"/>
    </ligand>
</feature>
<feature type="binding site" evidence="1">
    <location>
        <begin position="123"/>
        <end position="128"/>
    </location>
    <ligand>
        <name>S-adenosyl-L-methionine</name>
        <dbReference type="ChEBI" id="CHEBI:59789"/>
    </ligand>
</feature>